<name>PER20_ARATH</name>
<keyword id="KW-0025">Alternative splicing</keyword>
<keyword id="KW-0106">Calcium</keyword>
<keyword id="KW-1015">Disulfide bond</keyword>
<keyword id="KW-0325">Glycoprotein</keyword>
<keyword id="KW-0349">Heme</keyword>
<keyword id="KW-0376">Hydrogen peroxide</keyword>
<keyword id="KW-0408">Iron</keyword>
<keyword id="KW-0479">Metal-binding</keyword>
<keyword id="KW-0560">Oxidoreductase</keyword>
<keyword id="KW-0575">Peroxidase</keyword>
<keyword id="KW-1185">Reference proteome</keyword>
<keyword id="KW-0964">Secreted</keyword>
<keyword id="KW-0732">Signal</keyword>
<feature type="signal peptide" evidence="1">
    <location>
        <begin position="1"/>
        <end position="24"/>
    </location>
</feature>
<feature type="chain" id="PRO_0000023686" description="Peroxidase 20">
    <location>
        <begin position="25"/>
        <end position="336"/>
    </location>
</feature>
<feature type="active site" description="Proton acceptor" evidence="2 3">
    <location>
        <position position="70"/>
    </location>
</feature>
<feature type="binding site" evidence="2">
    <location>
        <position position="71"/>
    </location>
    <ligand>
        <name>Ca(2+)</name>
        <dbReference type="ChEBI" id="CHEBI:29108"/>
        <label>1</label>
    </ligand>
</feature>
<feature type="binding site" evidence="2">
    <location>
        <position position="74"/>
    </location>
    <ligand>
        <name>Ca(2+)</name>
        <dbReference type="ChEBI" id="CHEBI:29108"/>
        <label>1</label>
    </ligand>
</feature>
<feature type="binding site" evidence="2">
    <location>
        <position position="76"/>
    </location>
    <ligand>
        <name>Ca(2+)</name>
        <dbReference type="ChEBI" id="CHEBI:29108"/>
        <label>1</label>
    </ligand>
</feature>
<feature type="binding site" evidence="2">
    <location>
        <position position="78"/>
    </location>
    <ligand>
        <name>Ca(2+)</name>
        <dbReference type="ChEBI" id="CHEBI:29108"/>
        <label>1</label>
    </ligand>
</feature>
<feature type="binding site" evidence="2">
    <location>
        <position position="80"/>
    </location>
    <ligand>
        <name>Ca(2+)</name>
        <dbReference type="ChEBI" id="CHEBI:29108"/>
        <label>1</label>
    </ligand>
</feature>
<feature type="binding site" evidence="2">
    <location>
        <position position="167"/>
    </location>
    <ligand>
        <name>substrate</name>
    </ligand>
</feature>
<feature type="binding site" description="axial binding residue" evidence="2">
    <location>
        <position position="197"/>
    </location>
    <ligand>
        <name>heme b</name>
        <dbReference type="ChEBI" id="CHEBI:60344"/>
    </ligand>
    <ligandPart>
        <name>Fe</name>
        <dbReference type="ChEBI" id="CHEBI:18248"/>
    </ligandPart>
</feature>
<feature type="binding site" evidence="2">
    <location>
        <position position="198"/>
    </location>
    <ligand>
        <name>Ca(2+)</name>
        <dbReference type="ChEBI" id="CHEBI:29108"/>
        <label>2</label>
    </ligand>
</feature>
<feature type="binding site" evidence="2">
    <location>
        <position position="252"/>
    </location>
    <ligand>
        <name>Ca(2+)</name>
        <dbReference type="ChEBI" id="CHEBI:29108"/>
        <label>2</label>
    </ligand>
</feature>
<feature type="binding site" evidence="2">
    <location>
        <position position="255"/>
    </location>
    <ligand>
        <name>Ca(2+)</name>
        <dbReference type="ChEBI" id="CHEBI:29108"/>
        <label>2</label>
    </ligand>
</feature>
<feature type="binding site" evidence="2">
    <location>
        <position position="260"/>
    </location>
    <ligand>
        <name>Ca(2+)</name>
        <dbReference type="ChEBI" id="CHEBI:29108"/>
        <label>2</label>
    </ligand>
</feature>
<feature type="site" description="Transition state stabilizer" evidence="2">
    <location>
        <position position="66"/>
    </location>
</feature>
<feature type="glycosylation site" description="N-linked (GlcNAc...) asparagine" evidence="1">
    <location>
        <position position="170"/>
    </location>
</feature>
<feature type="disulfide bond" evidence="2">
    <location>
        <begin position="39"/>
        <end position="119"/>
    </location>
</feature>
<feature type="disulfide bond" evidence="2">
    <location>
        <begin position="72"/>
        <end position="77"/>
    </location>
</feature>
<feature type="disulfide bond" evidence="2">
    <location>
        <begin position="125"/>
        <end position="331"/>
    </location>
</feature>
<feature type="disulfide bond" evidence="2">
    <location>
        <begin position="204"/>
        <end position="239"/>
    </location>
</feature>
<comment type="function">
    <text>Removal of H(2)O(2), oxidation of toxic reductants, biosynthesis and degradation of lignin, suberization, auxin catabolism, response to environmental stresses such as wounding, pathogen attack and oxidative stress. These functions might be dependent on each isozyme/isoform in each plant tissue.</text>
</comment>
<comment type="function">
    <text>May be implicated in the systemic acquired resistance response via the salicylic acid signal transduction pathway.</text>
</comment>
<comment type="catalytic activity">
    <reaction>
        <text>2 a phenolic donor + H2O2 = 2 a phenolic radical donor + 2 H2O</text>
        <dbReference type="Rhea" id="RHEA:56136"/>
        <dbReference type="ChEBI" id="CHEBI:15377"/>
        <dbReference type="ChEBI" id="CHEBI:16240"/>
        <dbReference type="ChEBI" id="CHEBI:139520"/>
        <dbReference type="ChEBI" id="CHEBI:139521"/>
        <dbReference type="EC" id="1.11.1.7"/>
    </reaction>
</comment>
<comment type="cofactor">
    <cofactor evidence="2">
        <name>heme b</name>
        <dbReference type="ChEBI" id="CHEBI:60344"/>
    </cofactor>
    <text evidence="2">Binds 1 heme b (iron(II)-protoporphyrin IX) group per subunit.</text>
</comment>
<comment type="cofactor">
    <cofactor evidence="2">
        <name>Ca(2+)</name>
        <dbReference type="ChEBI" id="CHEBI:29108"/>
    </cofactor>
    <text evidence="2">Binds 2 calcium ions per subunit.</text>
</comment>
<comment type="subcellular location">
    <subcellularLocation>
        <location evidence="2">Secreted</location>
    </subcellularLocation>
</comment>
<comment type="alternative products">
    <event type="alternative splicing"/>
    <isoform>
        <id>Q9SLH7-1</id>
        <name>1</name>
        <sequence type="displayed"/>
    </isoform>
    <text>A number of isoforms are produced. According to EST sequences.</text>
</comment>
<comment type="induction">
    <text evidence="4">Late induced by benzothiadiazol, a chemical analog of salicylic acid. Enhanced expression following incompatible bacterial pathogen attack.</text>
</comment>
<comment type="miscellaneous">
    <text>There are 73 peroxidase genes in A.thaliana.</text>
</comment>
<comment type="similarity">
    <text evidence="2">Belongs to the peroxidase family. Classical plant (class III) peroxidase subfamily.</text>
</comment>
<evidence type="ECO:0000255" key="1"/>
<evidence type="ECO:0000255" key="2">
    <source>
        <dbReference type="PROSITE-ProRule" id="PRU00297"/>
    </source>
</evidence>
<evidence type="ECO:0000255" key="3">
    <source>
        <dbReference type="PROSITE-ProRule" id="PRU10012"/>
    </source>
</evidence>
<evidence type="ECO:0000269" key="4">
    <source>
    </source>
</evidence>
<protein>
    <recommendedName>
        <fullName>Peroxidase 20</fullName>
        <shortName>Atperox P20</shortName>
        <ecNumber>1.11.1.7</ecNumber>
    </recommendedName>
    <alternativeName>
        <fullName>ATP28a</fullName>
    </alternativeName>
</protein>
<gene>
    <name type="primary">PER20</name>
    <name type="synonym">P20</name>
    <name type="ordered locus">At2g35380</name>
    <name type="ORF">T32F12.24</name>
</gene>
<reference key="1">
    <citation type="journal article" date="1999" name="Nature">
        <title>Sequence and analysis of chromosome 2 of the plant Arabidopsis thaliana.</title>
        <authorList>
            <person name="Lin X."/>
            <person name="Kaul S."/>
            <person name="Rounsley S.D."/>
            <person name="Shea T.P."/>
            <person name="Benito M.-I."/>
            <person name="Town C.D."/>
            <person name="Fujii C.Y."/>
            <person name="Mason T.M."/>
            <person name="Bowman C.L."/>
            <person name="Barnstead M.E."/>
            <person name="Feldblyum T.V."/>
            <person name="Buell C.R."/>
            <person name="Ketchum K.A."/>
            <person name="Lee J.J."/>
            <person name="Ronning C.M."/>
            <person name="Koo H.L."/>
            <person name="Moffat K.S."/>
            <person name="Cronin L.A."/>
            <person name="Shen M."/>
            <person name="Pai G."/>
            <person name="Van Aken S."/>
            <person name="Umayam L."/>
            <person name="Tallon L.J."/>
            <person name="Gill J.E."/>
            <person name="Adams M.D."/>
            <person name="Carrera A.J."/>
            <person name="Creasy T.H."/>
            <person name="Goodman H.M."/>
            <person name="Somerville C.R."/>
            <person name="Copenhaver G.P."/>
            <person name="Preuss D."/>
            <person name="Nierman W.C."/>
            <person name="White O."/>
            <person name="Eisen J.A."/>
            <person name="Salzberg S.L."/>
            <person name="Fraser C.M."/>
            <person name="Venter J.C."/>
        </authorList>
    </citation>
    <scope>NUCLEOTIDE SEQUENCE [LARGE SCALE GENOMIC DNA]</scope>
    <source>
        <strain>cv. Columbia</strain>
    </source>
</reference>
<reference key="2">
    <citation type="journal article" date="2017" name="Plant J.">
        <title>Araport11: a complete reannotation of the Arabidopsis thaliana reference genome.</title>
        <authorList>
            <person name="Cheng C.Y."/>
            <person name="Krishnakumar V."/>
            <person name="Chan A.P."/>
            <person name="Thibaud-Nissen F."/>
            <person name="Schobel S."/>
            <person name="Town C.D."/>
        </authorList>
    </citation>
    <scope>GENOME REANNOTATION</scope>
    <source>
        <strain>cv. Columbia</strain>
    </source>
</reference>
<reference key="3">
    <citation type="journal article" date="2002" name="Science">
        <title>Functional annotation of a full-length Arabidopsis cDNA collection.</title>
        <authorList>
            <person name="Seki M."/>
            <person name="Narusaka M."/>
            <person name="Kamiya A."/>
            <person name="Ishida J."/>
            <person name="Satou M."/>
            <person name="Sakurai T."/>
            <person name="Nakajima M."/>
            <person name="Enju A."/>
            <person name="Akiyama K."/>
            <person name="Oono Y."/>
            <person name="Muramatsu M."/>
            <person name="Hayashizaki Y."/>
            <person name="Kawai J."/>
            <person name="Carninci P."/>
            <person name="Itoh M."/>
            <person name="Ishii Y."/>
            <person name="Arakawa T."/>
            <person name="Shibata K."/>
            <person name="Shinagawa A."/>
            <person name="Shinozaki K."/>
        </authorList>
    </citation>
    <scope>NUCLEOTIDE SEQUENCE [LARGE SCALE MRNA]</scope>
    <source>
        <strain>cv. Columbia</strain>
    </source>
</reference>
<reference key="4">
    <citation type="journal article" date="2003" name="Science">
        <title>Empirical analysis of transcriptional activity in the Arabidopsis genome.</title>
        <authorList>
            <person name="Yamada K."/>
            <person name="Lim J."/>
            <person name="Dale J.M."/>
            <person name="Chen H."/>
            <person name="Shinn P."/>
            <person name="Palm C.J."/>
            <person name="Southwick A.M."/>
            <person name="Wu H.C."/>
            <person name="Kim C.J."/>
            <person name="Nguyen M."/>
            <person name="Pham P.K."/>
            <person name="Cheuk R.F."/>
            <person name="Karlin-Newmann G."/>
            <person name="Liu S.X."/>
            <person name="Lam B."/>
            <person name="Sakano H."/>
            <person name="Wu T."/>
            <person name="Yu G."/>
            <person name="Miranda M."/>
            <person name="Quach H.L."/>
            <person name="Tripp M."/>
            <person name="Chang C.H."/>
            <person name="Lee J.M."/>
            <person name="Toriumi M.J."/>
            <person name="Chan M.M."/>
            <person name="Tang C.C."/>
            <person name="Onodera C.S."/>
            <person name="Deng J.M."/>
            <person name="Akiyama K."/>
            <person name="Ansari Y."/>
            <person name="Arakawa T."/>
            <person name="Banh J."/>
            <person name="Banno F."/>
            <person name="Bowser L."/>
            <person name="Brooks S.Y."/>
            <person name="Carninci P."/>
            <person name="Chao Q."/>
            <person name="Choy N."/>
            <person name="Enju A."/>
            <person name="Goldsmith A.D."/>
            <person name="Gurjal M."/>
            <person name="Hansen N.F."/>
            <person name="Hayashizaki Y."/>
            <person name="Johnson-Hopson C."/>
            <person name="Hsuan V.W."/>
            <person name="Iida K."/>
            <person name="Karnes M."/>
            <person name="Khan S."/>
            <person name="Koesema E."/>
            <person name="Ishida J."/>
            <person name="Jiang P.X."/>
            <person name="Jones T."/>
            <person name="Kawai J."/>
            <person name="Kamiya A."/>
            <person name="Meyers C."/>
            <person name="Nakajima M."/>
            <person name="Narusaka M."/>
            <person name="Seki M."/>
            <person name="Sakurai T."/>
            <person name="Satou M."/>
            <person name="Tamse R."/>
            <person name="Vaysberg M."/>
            <person name="Wallender E.K."/>
            <person name="Wong C."/>
            <person name="Yamamura Y."/>
            <person name="Yuan S."/>
            <person name="Shinozaki K."/>
            <person name="Davis R.W."/>
            <person name="Theologis A."/>
            <person name="Ecker J.R."/>
        </authorList>
    </citation>
    <scope>NUCLEOTIDE SEQUENCE [LARGE SCALE MRNA]</scope>
    <source>
        <strain>cv. Columbia</strain>
    </source>
</reference>
<reference key="5">
    <citation type="submission" date="1997-03" db="EMBL/GenBank/DDBJ databases">
        <title>From expressed sequence tags to structure, function, evolution and expression of 28 ER-targeted Arabidopsis peroxidases.</title>
        <authorList>
            <person name="Welinder K.G."/>
            <person name="Jespersen H.M."/>
            <person name="Kjaersgaard I.V.H."/>
            <person name="Justesen A.F."/>
            <person name="Oestergaard L."/>
            <person name="Abelskov A.K."/>
            <person name="Jensen R.B."/>
            <person name="Hansen L.N."/>
            <person name="Rasmussen S.K."/>
        </authorList>
    </citation>
    <scope>NUCLEOTIDE SEQUENCE [MRNA] OF 254-336</scope>
    <source>
        <strain>cv. Columbia</strain>
    </source>
</reference>
<reference key="6">
    <citation type="journal article" date="2000" name="Nat. Genet.">
        <title>The transcriptome of Arabidopsis thaliana during systemic acquired resistance.</title>
        <authorList>
            <person name="Maleck K."/>
            <person name="Levine A."/>
            <person name="Eulgem T."/>
            <person name="Morgan A."/>
            <person name="Schmid J."/>
            <person name="Lawton K.A."/>
            <person name="Dangl J.L."/>
            <person name="Dietrich R.A."/>
        </authorList>
    </citation>
    <scope>INDUCTION</scope>
    <source>
        <strain>cv. Columbia</strain>
        <strain>cv. Wassilewskija</strain>
    </source>
</reference>
<reference key="7">
    <citation type="journal article" date="2002" name="Gene">
        <title>Analysis and expression of the class III peroxidase large gene family in Arabidopsis thaliana.</title>
        <authorList>
            <person name="Tognolli M."/>
            <person name="Penel C."/>
            <person name="Greppin H."/>
            <person name="Simon P."/>
        </authorList>
    </citation>
    <scope>GENE FAMILY ORGANIZATION</scope>
    <scope>NOMENCLATURE</scope>
    <source>
        <strain>cv. Columbia</strain>
    </source>
</reference>
<sequence length="336" mass="37978">MEIKQKKVWLSLIVLYAITTSVLGDFGEPLLKGFYKESCPLAEEIVKHNIEVAVLKDPRMAASLLRLQFHDCFVLGCDASVLLDTHGDMLSEKQATPNLNSLRGFEVIDYIKYLLEEACPLTVSCSDILALAARDSVFLRGGPWWEVLLGRRDSLKASFAGANQFIPAPNSSLDSLIINFKQQGLNIQDLIALSGAHTIGKARCVSFKQRIVQPNMEQTFYVDEFRRHSTFRRVLGSQCKDSSRDNELSPLDIKTPAYFDNHYFINLLEGRGLLISDNVLVSEDHEGEIFQKVWEYAVNQDLFFIDFVESMLKMGNINVLTGIEGEIRENCRFVNI</sequence>
<organism>
    <name type="scientific">Arabidopsis thaliana</name>
    <name type="common">Mouse-ear cress</name>
    <dbReference type="NCBI Taxonomy" id="3702"/>
    <lineage>
        <taxon>Eukaryota</taxon>
        <taxon>Viridiplantae</taxon>
        <taxon>Streptophyta</taxon>
        <taxon>Embryophyta</taxon>
        <taxon>Tracheophyta</taxon>
        <taxon>Spermatophyta</taxon>
        <taxon>Magnoliopsida</taxon>
        <taxon>eudicotyledons</taxon>
        <taxon>Gunneridae</taxon>
        <taxon>Pentapetalae</taxon>
        <taxon>rosids</taxon>
        <taxon>malvids</taxon>
        <taxon>Brassicales</taxon>
        <taxon>Brassicaceae</taxon>
        <taxon>Camelineae</taxon>
        <taxon>Arabidopsis</taxon>
    </lineage>
</organism>
<accession>Q9SLH7</accession>
<accession>P93728</accession>
<proteinExistence type="evidence at transcript level"/>
<dbReference type="EC" id="1.11.1.7"/>
<dbReference type="EMBL" id="AC005314">
    <property type="protein sequence ID" value="AAC36183.1"/>
    <property type="molecule type" value="Genomic_DNA"/>
</dbReference>
<dbReference type="EMBL" id="CP002685">
    <property type="protein sequence ID" value="AEC09101.1"/>
    <property type="molecule type" value="Genomic_DNA"/>
</dbReference>
<dbReference type="EMBL" id="AK117626">
    <property type="protein sequence ID" value="BAC42282.1"/>
    <property type="molecule type" value="mRNA"/>
</dbReference>
<dbReference type="EMBL" id="BT004975">
    <property type="protein sequence ID" value="AAO50508.1"/>
    <property type="molecule type" value="mRNA"/>
</dbReference>
<dbReference type="EMBL" id="Y11793">
    <property type="protein sequence ID" value="CAA72489.1"/>
    <property type="molecule type" value="mRNA"/>
</dbReference>
<dbReference type="PIR" id="H84767">
    <property type="entry name" value="H84767"/>
</dbReference>
<dbReference type="RefSeq" id="NP_181081.1">
    <molecule id="Q9SLH7-1"/>
    <property type="nucleotide sequence ID" value="NM_129090.4"/>
</dbReference>
<dbReference type="SMR" id="Q9SLH7"/>
<dbReference type="FunCoup" id="Q9SLH7">
    <property type="interactions" value="128"/>
</dbReference>
<dbReference type="STRING" id="3702.Q9SLH7"/>
<dbReference type="PeroxiBase" id="101">
    <property type="entry name" value="AtPrx20"/>
</dbReference>
<dbReference type="GlyCosmos" id="Q9SLH7">
    <property type="glycosylation" value="1 site, No reported glycans"/>
</dbReference>
<dbReference type="GlyGen" id="Q9SLH7">
    <property type="glycosylation" value="1 site"/>
</dbReference>
<dbReference type="PaxDb" id="3702-AT2G35380.1"/>
<dbReference type="ProteomicsDB" id="236302">
    <molecule id="Q9SLH7-1"/>
</dbReference>
<dbReference type="EnsemblPlants" id="AT2G35380.1">
    <molecule id="Q9SLH7-1"/>
    <property type="protein sequence ID" value="AT2G35380.1"/>
    <property type="gene ID" value="AT2G35380"/>
</dbReference>
<dbReference type="GeneID" id="818105"/>
<dbReference type="Gramene" id="AT2G35380.1">
    <molecule id="Q9SLH7-1"/>
    <property type="protein sequence ID" value="AT2G35380.1"/>
    <property type="gene ID" value="AT2G35380"/>
</dbReference>
<dbReference type="KEGG" id="ath:AT2G35380"/>
<dbReference type="Araport" id="AT2G35380"/>
<dbReference type="TAIR" id="AT2G35380"/>
<dbReference type="eggNOG" id="ENOG502QV4E">
    <property type="taxonomic scope" value="Eukaryota"/>
</dbReference>
<dbReference type="HOGENOM" id="CLU_010543_0_1_1"/>
<dbReference type="InParanoid" id="Q9SLH7"/>
<dbReference type="OMA" id="AYASNQE"/>
<dbReference type="PhylomeDB" id="Q9SLH7"/>
<dbReference type="BioCyc" id="ARA:AT2G35380-MONOMER"/>
<dbReference type="PRO" id="PR:Q9SLH7"/>
<dbReference type="Proteomes" id="UP000006548">
    <property type="component" value="Chromosome 2"/>
</dbReference>
<dbReference type="ExpressionAtlas" id="Q9SLH7">
    <property type="expression patterns" value="baseline and differential"/>
</dbReference>
<dbReference type="GO" id="GO:0005576">
    <property type="term" value="C:extracellular region"/>
    <property type="evidence" value="ECO:0007669"/>
    <property type="project" value="UniProtKB-SubCell"/>
</dbReference>
<dbReference type="GO" id="GO:0020037">
    <property type="term" value="F:heme binding"/>
    <property type="evidence" value="ECO:0007669"/>
    <property type="project" value="InterPro"/>
</dbReference>
<dbReference type="GO" id="GO:0140825">
    <property type="term" value="F:lactoperoxidase activity"/>
    <property type="evidence" value="ECO:0007669"/>
    <property type="project" value="UniProtKB-EC"/>
</dbReference>
<dbReference type="GO" id="GO:0046872">
    <property type="term" value="F:metal ion binding"/>
    <property type="evidence" value="ECO:0007669"/>
    <property type="project" value="UniProtKB-KW"/>
</dbReference>
<dbReference type="GO" id="GO:0042744">
    <property type="term" value="P:hydrogen peroxide catabolic process"/>
    <property type="evidence" value="ECO:0007669"/>
    <property type="project" value="UniProtKB-KW"/>
</dbReference>
<dbReference type="GO" id="GO:0006979">
    <property type="term" value="P:response to oxidative stress"/>
    <property type="evidence" value="ECO:0007669"/>
    <property type="project" value="InterPro"/>
</dbReference>
<dbReference type="CDD" id="cd00693">
    <property type="entry name" value="secretory_peroxidase"/>
    <property type="match status" value="1"/>
</dbReference>
<dbReference type="FunFam" id="1.10.420.10:FF:000001">
    <property type="entry name" value="Peroxidase"/>
    <property type="match status" value="1"/>
</dbReference>
<dbReference type="FunFam" id="1.10.520.10:FF:000006">
    <property type="entry name" value="Peroxidase"/>
    <property type="match status" value="1"/>
</dbReference>
<dbReference type="Gene3D" id="1.10.520.10">
    <property type="match status" value="1"/>
</dbReference>
<dbReference type="Gene3D" id="1.10.420.10">
    <property type="entry name" value="Peroxidase, domain 2"/>
    <property type="match status" value="1"/>
</dbReference>
<dbReference type="InterPro" id="IPR002016">
    <property type="entry name" value="Haem_peroxidase"/>
</dbReference>
<dbReference type="InterPro" id="IPR010255">
    <property type="entry name" value="Haem_peroxidase_sf"/>
</dbReference>
<dbReference type="InterPro" id="IPR000823">
    <property type="entry name" value="Peroxidase_pln"/>
</dbReference>
<dbReference type="InterPro" id="IPR019794">
    <property type="entry name" value="Peroxidases_AS"/>
</dbReference>
<dbReference type="InterPro" id="IPR019793">
    <property type="entry name" value="Peroxidases_heam-ligand_BS"/>
</dbReference>
<dbReference type="InterPro" id="IPR033905">
    <property type="entry name" value="Secretory_peroxidase"/>
</dbReference>
<dbReference type="PANTHER" id="PTHR31388:SF152">
    <property type="entry name" value="PEROXIDASE 20"/>
    <property type="match status" value="1"/>
</dbReference>
<dbReference type="PANTHER" id="PTHR31388">
    <property type="entry name" value="PEROXIDASE 72-RELATED"/>
    <property type="match status" value="1"/>
</dbReference>
<dbReference type="Pfam" id="PF00141">
    <property type="entry name" value="peroxidase"/>
    <property type="match status" value="1"/>
</dbReference>
<dbReference type="PRINTS" id="PR00458">
    <property type="entry name" value="PEROXIDASE"/>
</dbReference>
<dbReference type="PRINTS" id="PR00461">
    <property type="entry name" value="PLPEROXIDASE"/>
</dbReference>
<dbReference type="SUPFAM" id="SSF48113">
    <property type="entry name" value="Heme-dependent peroxidases"/>
    <property type="match status" value="1"/>
</dbReference>
<dbReference type="PROSITE" id="PS00435">
    <property type="entry name" value="PEROXIDASE_1"/>
    <property type="match status" value="1"/>
</dbReference>
<dbReference type="PROSITE" id="PS00436">
    <property type="entry name" value="PEROXIDASE_2"/>
    <property type="match status" value="1"/>
</dbReference>
<dbReference type="PROSITE" id="PS50873">
    <property type="entry name" value="PEROXIDASE_4"/>
    <property type="match status" value="1"/>
</dbReference>